<comment type="function">
    <text evidence="1">Forms spikes that protrude from each vertex of the icosahedral capsid. Interacts with host receptor CXCAR to provide virion initial attachment to target cell. Fiber proteins are shed during virus entry, when virus is still at the cell surface (By similarity).</text>
</comment>
<comment type="subunit">
    <text evidence="1">Homotrimer. Interacts with host receptor CXCAR. Interacts (via N-terminal tail region) with pentons (By similarity).</text>
</comment>
<comment type="subcellular location">
    <subcellularLocation>
        <location evidence="1">Virion</location>
    </subcellularLocation>
    <subcellularLocation>
        <location evidence="1">Host nucleus</location>
    </subcellularLocation>
    <text evidence="1">Anchored to the pentons, protrudes from the virion surface.</text>
</comment>
<comment type="induction">
    <text>Expressed in the late phase of the viral replicative cycle.</text>
</comment>
<comment type="domain">
    <text evidence="1">The tail region anchors the fiber to penton base capsomers, whereas the shaft, built from several repeated motifs, allows the knob to protrude from the virion.</text>
</comment>
<comment type="miscellaneous">
    <text evidence="1">All late proteins expressed from the major late promoter are produced by alternative splicing and alternative polyadenylation of the same gene giving rise to non-overlapping ORFs. A leader sequence is present in the N-terminus of all these mRNAs and is recognized by the viral shutoff protein to provide expression although conventional translation via ribosome scanning from the cap has been shut off in the host cell (By similarity).</text>
</comment>
<comment type="similarity">
    <text evidence="2">Belongs to the adenoviridae fiber family.</text>
</comment>
<name>SPIKE_ADE15</name>
<evidence type="ECO:0000250" key="1"/>
<evidence type="ECO:0000305" key="2"/>
<evidence type="ECO:0007829" key="3">
    <source>
        <dbReference type="PDB" id="6STW"/>
    </source>
</evidence>
<protein>
    <recommendedName>
        <fullName>Fiber protein</fullName>
        <shortName>SPIKE</shortName>
    </recommendedName>
    <alternativeName>
        <fullName>Protein IV</fullName>
    </alternativeName>
</protein>
<dbReference type="EMBL" id="X72935">
    <property type="protein sequence ID" value="CAA51440.1"/>
    <property type="molecule type" value="Genomic_DNA"/>
</dbReference>
<dbReference type="EMBL" id="X72936">
    <property type="protein sequence ID" value="CAA51441.1"/>
    <property type="molecule type" value="Genomic_DNA"/>
</dbReference>
<dbReference type="EMBL" id="X74669">
    <property type="protein sequence ID" value="CAA52733.1"/>
    <property type="molecule type" value="Genomic_DNA"/>
</dbReference>
<dbReference type="PIR" id="S32664">
    <property type="entry name" value="S32664"/>
</dbReference>
<dbReference type="PDB" id="6STW">
    <property type="method" value="X-ray"/>
    <property type="resolution" value="1.37 A"/>
    <property type="chains" value="A/B/C=178-367"/>
</dbReference>
<dbReference type="PDBsum" id="6STW"/>
<dbReference type="SMR" id="P36847"/>
<dbReference type="GO" id="GO:0042025">
    <property type="term" value="C:host cell nucleus"/>
    <property type="evidence" value="ECO:0007669"/>
    <property type="project" value="UniProtKB-SubCell"/>
</dbReference>
<dbReference type="GO" id="GO:0019028">
    <property type="term" value="C:viral capsid"/>
    <property type="evidence" value="ECO:0007669"/>
    <property type="project" value="UniProtKB-KW"/>
</dbReference>
<dbReference type="GO" id="GO:0098671">
    <property type="term" value="P:adhesion receptor-mediated virion attachment to host cell"/>
    <property type="evidence" value="ECO:0007669"/>
    <property type="project" value="UniProtKB-KW"/>
</dbReference>
<dbReference type="GO" id="GO:0007155">
    <property type="term" value="P:cell adhesion"/>
    <property type="evidence" value="ECO:0007669"/>
    <property type="project" value="InterPro"/>
</dbReference>
<dbReference type="GO" id="GO:0046718">
    <property type="term" value="P:symbiont entry into host cell"/>
    <property type="evidence" value="ECO:0007669"/>
    <property type="project" value="UniProtKB-KW"/>
</dbReference>
<dbReference type="Gene3D" id="6.20.10.20">
    <property type="match status" value="1"/>
</dbReference>
<dbReference type="Gene3D" id="2.60.90.10">
    <property type="entry name" value="Adenovirus pIV-related, attachment domain"/>
    <property type="match status" value="1"/>
</dbReference>
<dbReference type="InterPro" id="IPR000931">
    <property type="entry name" value="Adeno_fibre"/>
</dbReference>
<dbReference type="InterPro" id="IPR000978">
    <property type="entry name" value="Adeno_fibre_knob"/>
</dbReference>
<dbReference type="InterPro" id="IPR008982">
    <property type="entry name" value="Adenovirus_pIV-like_att"/>
</dbReference>
<dbReference type="InterPro" id="IPR009013">
    <property type="entry name" value="Attachment_protein_shaft_sf"/>
</dbReference>
<dbReference type="Pfam" id="PF00541">
    <property type="entry name" value="Adeno_knob"/>
    <property type="match status" value="1"/>
</dbReference>
<dbReference type="PRINTS" id="PR00307">
    <property type="entry name" value="ADENOVSFIBRE"/>
</dbReference>
<dbReference type="SUPFAM" id="SSF51225">
    <property type="entry name" value="Fibre shaft of virus attachment proteins"/>
    <property type="match status" value="1"/>
</dbReference>
<dbReference type="SUPFAM" id="SSF49835">
    <property type="entry name" value="Virus attachment protein globular domain"/>
    <property type="match status" value="1"/>
</dbReference>
<sequence length="367" mass="39983">MSKRLRVEDDFNPVYPYGYARNQNIPFLTPPFVSSDGFQNFPPGVLSLKLADPIAIANGNVSLKMGGGLTLQEGTGNLTVNTEPPLQLTNNRIGIALDAPFDVIGGKLTLLAGHGLSIITEETSPLPGLVNTLVVLTGKGLGTDTTDNGGSIRVRVGEGGGLSFNEAGDLVAFNKKEDMRTLWTTPDPSPNCKIIEDKDSKLTLILTKCGSQILGSVSLLVVKGKFSNINNTTNPNEADKQITVKLLFDANGVLKQGSTMDSSYWNYRSDNSNLSQPYKKAVGFMPSKTAYPKQTKPTNKEISQAKNKIVSNVYLGGKIDQPCVIIISFNEEADSDYSIVFYFKWYKTYENVQFDSSSFNFSYIAQE</sequence>
<gene>
    <name type="ORF">L5</name>
</gene>
<reference key="1">
    <citation type="journal article" date="1995" name="Virology">
        <title>Immunological adenovirus variant strains of subgenus D: comparison of the hexon and fiber sequences.</title>
        <authorList>
            <person name="Eiz B."/>
            <person name="Adrian T."/>
            <person name="Pring-Akerblom P."/>
        </authorList>
    </citation>
    <scope>NUCLEOTIDE SEQUENCE [GENOMIC DNA]</scope>
    <source>
        <strain>Isolate HXB2956</strain>
    </source>
</reference>
<reference key="2">
    <citation type="journal article" date="1995" name="Virology">
        <title>Characterization of adenovirus subgenus D fiber genes.</title>
        <authorList>
            <person name="Pring-Akerblom P."/>
            <person name="Adrian T."/>
        </authorList>
    </citation>
    <scope>NUCLEOTIDE SEQUENCE [GENOMIC DNA]</scope>
    <source>
        <strain>Isolate HXB2956</strain>
        <strain>Isolate HXH10009</strain>
    </source>
</reference>
<reference key="3">
    <citation type="journal article" date="2005" name="J. Virol.">
        <title>Adenovirus receptors.</title>
        <authorList>
            <person name="Zhang Y."/>
            <person name="Bergelson J.M."/>
        </authorList>
    </citation>
    <scope>REVIEW</scope>
</reference>
<feature type="chain" id="PRO_0000221796" description="Fiber protein">
    <location>
        <begin position="1"/>
        <end position="367"/>
    </location>
</feature>
<feature type="strand" evidence="3">
    <location>
        <begin position="181"/>
        <end position="184"/>
    </location>
</feature>
<feature type="strand" evidence="3">
    <location>
        <begin position="194"/>
        <end position="196"/>
    </location>
</feature>
<feature type="strand" evidence="3">
    <location>
        <begin position="200"/>
        <end position="209"/>
    </location>
</feature>
<feature type="strand" evidence="3">
    <location>
        <begin position="212"/>
        <end position="221"/>
    </location>
</feature>
<feature type="helix" evidence="3">
    <location>
        <begin position="225"/>
        <end position="228"/>
    </location>
</feature>
<feature type="turn" evidence="3">
    <location>
        <begin position="231"/>
        <end position="233"/>
    </location>
</feature>
<feature type="helix" evidence="3">
    <location>
        <begin position="237"/>
        <end position="240"/>
    </location>
</feature>
<feature type="strand" evidence="3">
    <location>
        <begin position="241"/>
        <end position="248"/>
    </location>
</feature>
<feature type="strand" evidence="3">
    <location>
        <begin position="258"/>
        <end position="260"/>
    </location>
</feature>
<feature type="helix" evidence="3">
    <location>
        <begin position="282"/>
        <end position="284"/>
    </location>
</feature>
<feature type="turn" evidence="3">
    <location>
        <begin position="288"/>
        <end position="290"/>
    </location>
</feature>
<feature type="strand" evidence="3">
    <location>
        <begin position="308"/>
        <end position="315"/>
    </location>
</feature>
<feature type="strand" evidence="3">
    <location>
        <begin position="322"/>
        <end position="330"/>
    </location>
</feature>
<feature type="strand" evidence="3">
    <location>
        <begin position="335"/>
        <end position="344"/>
    </location>
</feature>
<feature type="strand" evidence="3">
    <location>
        <begin position="350"/>
        <end position="352"/>
    </location>
</feature>
<feature type="strand" evidence="3">
    <location>
        <begin position="359"/>
        <end position="365"/>
    </location>
</feature>
<organismHost>
    <name type="scientific">Homo sapiens</name>
    <name type="common">Human</name>
    <dbReference type="NCBI Taxonomy" id="9606"/>
</organismHost>
<organism>
    <name type="scientific">Human adenovirus D serotype 15</name>
    <name type="common">HAdV-15</name>
    <name type="synonym">Human adenovirus 15</name>
    <dbReference type="NCBI Taxonomy" id="28276"/>
    <lineage>
        <taxon>Viruses</taxon>
        <taxon>Varidnaviria</taxon>
        <taxon>Bamfordvirae</taxon>
        <taxon>Preplasmiviricota</taxon>
        <taxon>Tectiliviricetes</taxon>
        <taxon>Rowavirales</taxon>
        <taxon>Adenoviridae</taxon>
        <taxon>Mastadenovirus</taxon>
        <taxon>Human mastadenovirus D</taxon>
    </lineage>
</organism>
<accession>P36847</accession>
<keyword id="KW-0002">3D-structure</keyword>
<keyword id="KW-0167">Capsid protein</keyword>
<keyword id="KW-1048">Host nucleus</keyword>
<keyword id="KW-0945">Host-virus interaction</keyword>
<keyword id="KW-0426">Late protein</keyword>
<keyword id="KW-1233">Viral attachment to host adhesion receptor</keyword>
<keyword id="KW-1161">Viral attachment to host cell</keyword>
<keyword id="KW-0946">Virion</keyword>
<keyword id="KW-1160">Virus entry into host cell</keyword>
<proteinExistence type="evidence at protein level"/>